<organism>
    <name type="scientific">Tetronarce californica</name>
    <name type="common">Pacific electric ray</name>
    <name type="synonym">Torpedo californica</name>
    <dbReference type="NCBI Taxonomy" id="7787"/>
    <lineage>
        <taxon>Eukaryota</taxon>
        <taxon>Metazoa</taxon>
        <taxon>Chordata</taxon>
        <taxon>Craniata</taxon>
        <taxon>Vertebrata</taxon>
        <taxon>Chondrichthyes</taxon>
        <taxon>Elasmobranchii</taxon>
        <taxon>Batoidea</taxon>
        <taxon>Torpediniformes</taxon>
        <taxon>Torpedinidae</taxon>
        <taxon>Tetronarce</taxon>
    </lineage>
</organism>
<name>ENP2_TETCF</name>
<accession>P14401</accession>
<sequence>EFTEYLTESVEVPSPFDLLEPPTSGGFLKLSKPCCYIFPGGRGDSALFAVNGFNILVDGGSERKSCFWKLVRHLDRIDSILLTHIGADNLPGINGLLQRKIAEQDEEQSQGSTTYSDWMKNLISPELGVVFFNVPDKLKTQESSMRVKRSIEEACLTLQYLTKLGVNPEPLNRVVTATIDPIPLFHKMGVGRLDMYILNPVKDSKEMQFLMQKWAGNSKAKTGIKLPNGKEGEISVPYLTSITALVVWHPANPSEKIVRVLFPGNAPQNKILEGLEKLKHLDFLKYPVPTHKDIAGPLTPPVVKQTKIRQRTDSRESLKSSPKPSAPKPVKKEEPSKRRPPNTQRSRRRL</sequence>
<dbReference type="EMBL" id="M30271">
    <property type="protein sequence ID" value="AAA49280.1"/>
    <property type="molecule type" value="mRNA"/>
</dbReference>
<dbReference type="PIR" id="B33319">
    <property type="entry name" value="B33319"/>
</dbReference>
<dbReference type="GO" id="GO:0005829">
    <property type="term" value="C:cytosol"/>
    <property type="evidence" value="ECO:0007669"/>
    <property type="project" value="TreeGrafter"/>
</dbReference>
<dbReference type="GO" id="GO:0030425">
    <property type="term" value="C:dendrite"/>
    <property type="evidence" value="ECO:0007669"/>
    <property type="project" value="TreeGrafter"/>
</dbReference>
<dbReference type="GO" id="GO:0012505">
    <property type="term" value="C:endomembrane system"/>
    <property type="evidence" value="ECO:0007669"/>
    <property type="project" value="UniProtKB-SubCell"/>
</dbReference>
<dbReference type="GO" id="GO:0016020">
    <property type="term" value="C:membrane"/>
    <property type="evidence" value="ECO:0007669"/>
    <property type="project" value="UniProtKB-KW"/>
</dbReference>
<dbReference type="GO" id="GO:0005874">
    <property type="term" value="C:microtubule"/>
    <property type="evidence" value="ECO:0007669"/>
    <property type="project" value="InterPro"/>
</dbReference>
<dbReference type="GO" id="GO:0005875">
    <property type="term" value="C:microtubule associated complex"/>
    <property type="evidence" value="ECO:0007669"/>
    <property type="project" value="TreeGrafter"/>
</dbReference>
<dbReference type="GO" id="GO:0043025">
    <property type="term" value="C:neuronal cell body"/>
    <property type="evidence" value="ECO:0007669"/>
    <property type="project" value="TreeGrafter"/>
</dbReference>
<dbReference type="GO" id="GO:0045202">
    <property type="term" value="C:synapse"/>
    <property type="evidence" value="ECO:0007669"/>
    <property type="project" value="TreeGrafter"/>
</dbReference>
<dbReference type="GO" id="GO:0003779">
    <property type="term" value="F:actin binding"/>
    <property type="evidence" value="ECO:0007669"/>
    <property type="project" value="TreeGrafter"/>
</dbReference>
<dbReference type="GO" id="GO:0008017">
    <property type="term" value="F:microtubule binding"/>
    <property type="evidence" value="ECO:0007669"/>
    <property type="project" value="InterPro"/>
</dbReference>
<dbReference type="GO" id="GO:0007409">
    <property type="term" value="P:axonogenesis"/>
    <property type="evidence" value="ECO:0007669"/>
    <property type="project" value="TreeGrafter"/>
</dbReference>
<dbReference type="GO" id="GO:0016358">
    <property type="term" value="P:dendrite development"/>
    <property type="evidence" value="ECO:0007669"/>
    <property type="project" value="TreeGrafter"/>
</dbReference>
<dbReference type="GO" id="GO:0000226">
    <property type="term" value="P:microtubule cytoskeleton organization"/>
    <property type="evidence" value="ECO:0007669"/>
    <property type="project" value="InterPro"/>
</dbReference>
<dbReference type="GO" id="GO:0031114">
    <property type="term" value="P:regulation of microtubule depolymerization"/>
    <property type="evidence" value="ECO:0007669"/>
    <property type="project" value="TreeGrafter"/>
</dbReference>
<dbReference type="InterPro" id="IPR026074">
    <property type="entry name" value="MAP1"/>
</dbReference>
<dbReference type="InterPro" id="IPR036866">
    <property type="entry name" value="RibonucZ/Hydroxyglut_hydro"/>
</dbReference>
<dbReference type="PANTHER" id="PTHR13843">
    <property type="entry name" value="MICROTUBULE-ASSOCIATED PROTEIN"/>
    <property type="match status" value="1"/>
</dbReference>
<dbReference type="PANTHER" id="PTHR13843:SF6">
    <property type="entry name" value="MICROTUBULE-ASSOCIATED PROTEIN 1A"/>
    <property type="match status" value="1"/>
</dbReference>
<dbReference type="Pfam" id="PF25281">
    <property type="entry name" value="MBL_MAP1B"/>
    <property type="match status" value="1"/>
</dbReference>
<dbReference type="SUPFAM" id="SSF56281">
    <property type="entry name" value="Metallo-hydrolase/oxidoreductase"/>
    <property type="match status" value="1"/>
</dbReference>
<evidence type="ECO:0000256" key="1">
    <source>
        <dbReference type="SAM" id="MobiDB-lite"/>
    </source>
</evidence>
<evidence type="ECO:0000305" key="2"/>
<reference key="1">
    <citation type="journal article" date="1989" name="DNA">
        <title>Isolation and characterization of two homologous cDNA clones from Torpedo electromotor neurons.</title>
        <authorList>
            <person name="Ngsee J.K."/>
            <person name="Scheller R.H."/>
        </authorList>
    </citation>
    <scope>NUCLEOTIDE SEQUENCE [MRNA]</scope>
</reference>
<protein>
    <recommendedName>
        <fullName>Electromotor neuron-associated protein 2</fullName>
    </recommendedName>
</protein>
<proteinExistence type="evidence at transcript level"/>
<comment type="subcellular location">
    <subcellularLocation>
        <location>Endomembrane system</location>
        <topology>Peripheral membrane protein</topology>
    </subcellularLocation>
    <text>Associated with membranes of intracellular organelles.</text>
</comment>
<comment type="similarity">
    <text evidence="2">To T.californica electromotor neuron-associated protein 1.</text>
</comment>
<feature type="chain" id="PRO_0000086978" description="Electromotor neuron-associated protein 2">
    <location>
        <begin position="1" status="less than"/>
        <end position="350"/>
    </location>
</feature>
<feature type="region of interest" description="Disordered" evidence="1">
    <location>
        <begin position="305"/>
        <end position="350"/>
    </location>
</feature>
<feature type="non-terminal residue">
    <location>
        <position position="1"/>
    </location>
</feature>
<keyword id="KW-0472">Membrane</keyword>